<evidence type="ECO:0000250" key="1">
    <source>
        <dbReference type="UniProtKB" id="Q289M7"/>
    </source>
</evidence>
<evidence type="ECO:0000255" key="2">
    <source>
        <dbReference type="HAMAP-Rule" id="MF_04072"/>
    </source>
</evidence>
<evidence type="ECO:0000305" key="3"/>
<dbReference type="EMBL" id="M81707">
    <property type="protein sequence ID" value="ABF71860.1"/>
    <property type="molecule type" value="Genomic_RNA"/>
</dbReference>
<dbReference type="PDB" id="1WBX">
    <property type="method" value="X-ray"/>
    <property type="resolution" value="1.90 A"/>
    <property type="chains" value="C=468-477"/>
</dbReference>
<dbReference type="PDBsum" id="1WBX"/>
<dbReference type="SMR" id="P26140"/>
<dbReference type="GlyCosmos" id="P26140">
    <property type="glycosylation" value="8 sites, No reported glycans"/>
</dbReference>
<dbReference type="EvolutionaryTrace" id="P26140"/>
<dbReference type="GO" id="GO:0020002">
    <property type="term" value="C:host cell plasma membrane"/>
    <property type="evidence" value="ECO:0007669"/>
    <property type="project" value="UniProtKB-SubCell"/>
</dbReference>
<dbReference type="GO" id="GO:0016020">
    <property type="term" value="C:membrane"/>
    <property type="evidence" value="ECO:0007669"/>
    <property type="project" value="UniProtKB-UniRule"/>
</dbReference>
<dbReference type="GO" id="GO:0019031">
    <property type="term" value="C:viral envelope"/>
    <property type="evidence" value="ECO:0007669"/>
    <property type="project" value="UniProtKB-UniRule"/>
</dbReference>
<dbReference type="GO" id="GO:0055036">
    <property type="term" value="C:virion membrane"/>
    <property type="evidence" value="ECO:0007669"/>
    <property type="project" value="UniProtKB-SubCell"/>
</dbReference>
<dbReference type="GO" id="GO:0046789">
    <property type="term" value="F:host cell surface receptor binding"/>
    <property type="evidence" value="ECO:0007669"/>
    <property type="project" value="UniProtKB-UniRule"/>
</dbReference>
<dbReference type="GO" id="GO:0075512">
    <property type="term" value="P:clathrin-dependent endocytosis of virus by host cell"/>
    <property type="evidence" value="ECO:0007669"/>
    <property type="project" value="UniProtKB-UniRule"/>
</dbReference>
<dbReference type="GO" id="GO:0039654">
    <property type="term" value="P:fusion of virus membrane with host endosome membrane"/>
    <property type="evidence" value="ECO:0007669"/>
    <property type="project" value="UniProtKB-UniRule"/>
</dbReference>
<dbReference type="GO" id="GO:0019064">
    <property type="term" value="P:fusion of virus membrane with host plasma membrane"/>
    <property type="evidence" value="ECO:0007669"/>
    <property type="project" value="InterPro"/>
</dbReference>
<dbReference type="GO" id="GO:0046761">
    <property type="term" value="P:viral budding from plasma membrane"/>
    <property type="evidence" value="ECO:0007669"/>
    <property type="project" value="UniProtKB-UniRule"/>
</dbReference>
<dbReference type="GO" id="GO:0019062">
    <property type="term" value="P:virion attachment to host cell"/>
    <property type="evidence" value="ECO:0007669"/>
    <property type="project" value="UniProtKB-KW"/>
</dbReference>
<dbReference type="FunFam" id="3.90.20.10:FF:000002">
    <property type="entry name" value="Hemagglutinin"/>
    <property type="match status" value="1"/>
</dbReference>
<dbReference type="Gene3D" id="3.90.20.10">
    <property type="match status" value="1"/>
</dbReference>
<dbReference type="Gene3D" id="3.90.209.20">
    <property type="match status" value="1"/>
</dbReference>
<dbReference type="Gene3D" id="2.10.77.10">
    <property type="entry name" value="Hemagglutinin Chain A, Domain 2"/>
    <property type="match status" value="1"/>
</dbReference>
<dbReference type="HAMAP" id="MF_04072">
    <property type="entry name" value="INFV_HEMA"/>
    <property type="match status" value="1"/>
</dbReference>
<dbReference type="InterPro" id="IPR008980">
    <property type="entry name" value="Capsid_hemagglutn"/>
</dbReference>
<dbReference type="InterPro" id="IPR013828">
    <property type="entry name" value="Hemagglutn_HA1_a/b_dom_sf"/>
</dbReference>
<dbReference type="InterPro" id="IPR000149">
    <property type="entry name" value="Hemagglutn_influenz_A"/>
</dbReference>
<dbReference type="InterPro" id="IPR001364">
    <property type="entry name" value="Hemagglutn_influenz_A/B"/>
</dbReference>
<dbReference type="Pfam" id="PF00509">
    <property type="entry name" value="Hemagglutinin"/>
    <property type="match status" value="1"/>
</dbReference>
<dbReference type="PRINTS" id="PR00330">
    <property type="entry name" value="HEMAGGLUTN1"/>
</dbReference>
<dbReference type="PRINTS" id="PR00329">
    <property type="entry name" value="HEMAGGLUTN12"/>
</dbReference>
<dbReference type="SUPFAM" id="SSF58064">
    <property type="entry name" value="Influenza hemagglutinin (stalk)"/>
    <property type="match status" value="1"/>
</dbReference>
<dbReference type="SUPFAM" id="SSF49818">
    <property type="entry name" value="Viral protein domain"/>
    <property type="match status" value="1"/>
</dbReference>
<feature type="signal peptide" evidence="2">
    <location>
        <begin position="1"/>
        <end position="17"/>
    </location>
</feature>
<feature type="chain" id="PRO_0000440529" description="Hemagglutinin" evidence="2">
    <location>
        <begin position="18"/>
        <end position="566"/>
    </location>
</feature>
<feature type="chain" id="PRO_0000039079" description="Hemagglutinin HA1 chain" evidence="2">
    <location>
        <begin position="18"/>
        <end position="343"/>
    </location>
</feature>
<feature type="chain" id="PRO_0000039080" description="Hemagglutinin HA2 chain" evidence="2">
    <location>
        <begin position="345"/>
        <end position="566"/>
    </location>
</feature>
<feature type="topological domain" description="Extracellular" evidence="2">
    <location>
        <begin position="18"/>
        <end position="529"/>
    </location>
</feature>
<feature type="transmembrane region" description="Helical" evidence="2">
    <location>
        <begin position="530"/>
        <end position="550"/>
    </location>
</feature>
<feature type="topological domain" description="Cytoplasmic" evidence="2">
    <location>
        <begin position="551"/>
        <end position="566"/>
    </location>
</feature>
<feature type="site" description="Cleavage; by host" evidence="2">
    <location>
        <begin position="344"/>
        <end position="345"/>
    </location>
</feature>
<feature type="lipid moiety-binding region" description="S-palmitoyl cysteine; by host" evidence="2">
    <location>
        <position position="555"/>
    </location>
</feature>
<feature type="lipid moiety-binding region" description="S-palmitoyl cysteine; by host" evidence="2">
    <location>
        <position position="562"/>
    </location>
</feature>
<feature type="lipid moiety-binding region" description="S-palmitoyl cysteine; by host" evidence="2">
    <location>
        <position position="565"/>
    </location>
</feature>
<feature type="glycosylation site" description="N-linked (GlcNAc...) asparagine; by host" evidence="2">
    <location>
        <position position="27"/>
    </location>
</feature>
<feature type="glycosylation site" description="N-linked (GlcNAc...) asparagine; by host" evidence="2">
    <location>
        <position position="28"/>
    </location>
</feature>
<feature type="glycosylation site" description="N-linked (GlcNAc...) asparagine; by host" evidence="2">
    <location>
        <position position="40"/>
    </location>
</feature>
<feature type="glycosylation site" description="N-linked (GlcNAc...) asparagine; by host" evidence="2">
    <location>
        <position position="104"/>
    </location>
</feature>
<feature type="glycosylation site" description="N-linked (GlcNAc...) asparagine; by host" evidence="2">
    <location>
        <position position="293"/>
    </location>
</feature>
<feature type="glycosylation site" description="N-linked (GlcNAc...) asparagine; by host" evidence="2">
    <location>
        <position position="304"/>
    </location>
</feature>
<feature type="glycosylation site" description="N-linked (GlcNAc...) asparagine; by host" evidence="2">
    <location>
        <position position="498"/>
    </location>
</feature>
<feature type="glycosylation site" description="N-linked (GlcNAc...) asparagine; by host" evidence="2">
    <location>
        <position position="505"/>
    </location>
</feature>
<feature type="disulfide bond" description="Interchain (between HA1 and HA2 chains)" evidence="2">
    <location>
        <begin position="21"/>
        <end position="481"/>
    </location>
</feature>
<feature type="disulfide bond" evidence="2">
    <location>
        <begin position="59"/>
        <end position="292"/>
    </location>
</feature>
<feature type="disulfide bond" evidence="2">
    <location>
        <begin position="72"/>
        <end position="84"/>
    </location>
</feature>
<feature type="disulfide bond" evidence="2">
    <location>
        <begin position="107"/>
        <end position="153"/>
    </location>
</feature>
<feature type="disulfide bond" evidence="2">
    <location>
        <begin position="296"/>
        <end position="320"/>
    </location>
</feature>
<feature type="disulfide bond" evidence="2">
    <location>
        <begin position="488"/>
        <end position="492"/>
    </location>
</feature>
<proteinExistence type="evidence at protein level"/>
<gene>
    <name evidence="2" type="primary">HA</name>
</gene>
<accession>P26140</accession>
<accession>Q194S8</accession>
<reference key="1">
    <citation type="journal article" date="1992" name="J. Virol.">
        <title>Hemagglutinin mutations related to antigenic variation in H1 swine influenza viruses.</title>
        <authorList>
            <person name="Luoh S.M."/>
            <person name="McGregor M.S."/>
            <person name="Hinshaw V.S."/>
        </authorList>
    </citation>
    <scope>NUCLEOTIDE SEQUENCE [GENOMIC RNA]</scope>
</reference>
<comment type="function">
    <text>Binds to sialic acid-containing receptors on the cell surface, bringing about the attachment of the virus particle to the cell. This attachment induces virion internalization of about two third of the virus particles through clathrin-dependent endocytosis and about one third through a clathrin- and caveolin-independent pathway. Plays a major role in the determination of host range restriction and virulence. Class I viral fusion protein. Responsible for penetration of the virus into the cell cytoplasm by mediating the fusion of the membrane of the endocytosed virus particle with the endosomal membrane. Low pH in endosomes induces an irreversible conformational change in HA2, releasing the fusion hydrophobic peptide. Several trimers are required to form a competent fusion pore.</text>
</comment>
<comment type="function">
    <text evidence="2">Binds to sialic acid-containing receptors on the cell surface, bringing about the attachment of the virus particle to the cell. This attachment induces virion internalization either through clathrin-dependent endocytosis or through clathrin- and caveolin-independent pathway. Plays a major role in the determination of host range restriction and virulence. Class I viral fusion protein. Responsible for penetration of the virus into the cell cytoplasm by mediating the fusion of the membrane of the endocytosed virus particle with the endosomal membrane. Low pH in endosomes induces an irreversible conformational change in HA2, releasing the fusion hydrophobic peptide. Several trimers are required to form a competent fusion pore.</text>
</comment>
<comment type="subunit">
    <text evidence="1">Homotrimer of disulfide-linked HA1-HA2. Interacts with human CACNA1C.</text>
</comment>
<comment type="subcellular location">
    <subcellularLocation>
        <location evidence="2">Virion membrane</location>
        <topology evidence="2">Single-pass type I membrane protein</topology>
    </subcellularLocation>
    <subcellularLocation>
        <location evidence="2">Host apical cell membrane</location>
        <topology evidence="2">Single-pass type I membrane protein</topology>
    </subcellularLocation>
    <text evidence="2">Targeted to the apical plasma membrane in epithelial polarized cells through a signal present in the transmembrane domain. Associated with glycosphingolipid- and cholesterol-enriched detergent-resistant lipid rafts.</text>
</comment>
<comment type="PTM">
    <text evidence="2">Palmitoylated.</text>
</comment>
<comment type="PTM">
    <text evidence="2">In natural infection, inactive HA is matured into HA1 and HA2 outside the cell by one or more trypsin-like, arginine-specific endoprotease secreted by the bronchial epithelial cells. One identified protease that may be involved in this process is secreted in lungs by club cells.</text>
</comment>
<comment type="miscellaneous">
    <text>Major glycoprotein, comprises over 80% of the envelope proteins present in virus particle.</text>
</comment>
<comment type="miscellaneous">
    <text>The extent of infection into host organism is determined by HA. Influenza viruses bud from the apical surface of polarized epithelial cells (e.g. bronchial epithelial cells) into lumen of lungs and are therefore usually pneumotropic. The reason is that HA is cleaved by tryptase clara which is restricted to lungs. However, HAs of H5 and H7 pantropic avian viruses subtypes can be cleaved by furin and subtilisin-type enzymes, allowing the virus to grow in other organs than lungs.</text>
</comment>
<comment type="miscellaneous">
    <text evidence="3">The influenza A genome consist of 8 RNA segments. Genetic variation of hemagglutinin and/or neuraminidase genes results in the emergence of new influenza strains. The mechanism of variation can be the result of point mutations or the result of genetic reassortment between segments of two different strains.</text>
</comment>
<comment type="similarity">
    <text evidence="2">Belongs to the influenza viruses hemagglutinin family.</text>
</comment>
<name>HEMA_I88A6</name>
<keyword id="KW-0002">3D-structure</keyword>
<keyword id="KW-1167">Clathrin- and caveolin-independent endocytosis of virus by host</keyword>
<keyword id="KW-1165">Clathrin-mediated endocytosis of virus by host</keyword>
<keyword id="KW-1015">Disulfide bond</keyword>
<keyword id="KW-1170">Fusion of virus membrane with host endosomal membrane</keyword>
<keyword id="KW-1168">Fusion of virus membrane with host membrane</keyword>
<keyword id="KW-0325">Glycoprotein</keyword>
<keyword id="KW-0348">Hemagglutinin</keyword>
<keyword id="KW-1032">Host cell membrane</keyword>
<keyword id="KW-1043">Host membrane</keyword>
<keyword id="KW-0945">Host-virus interaction</keyword>
<keyword id="KW-0449">Lipoprotein</keyword>
<keyword id="KW-0472">Membrane</keyword>
<keyword id="KW-0564">Palmitate</keyword>
<keyword id="KW-0732">Signal</keyword>
<keyword id="KW-0812">Transmembrane</keyword>
<keyword id="KW-1133">Transmembrane helix</keyword>
<keyword id="KW-1161">Viral attachment to host cell</keyword>
<keyword id="KW-0261">Viral envelope protein</keyword>
<keyword id="KW-1162">Viral penetration into host cytoplasm</keyword>
<keyword id="KW-0946">Virion</keyword>
<keyword id="KW-1164">Virus endocytosis by host</keyword>
<keyword id="KW-1160">Virus entry into host cell</keyword>
<organism>
    <name type="scientific">Influenza A virus (strain A/Swine/Indiana/1726/1988 H1N1)</name>
    <dbReference type="NCBI Taxonomy" id="384487"/>
    <lineage>
        <taxon>Viruses</taxon>
        <taxon>Riboviria</taxon>
        <taxon>Orthornavirae</taxon>
        <taxon>Negarnaviricota</taxon>
        <taxon>Polyploviricotina</taxon>
        <taxon>Insthoviricetes</taxon>
        <taxon>Articulavirales</taxon>
        <taxon>Orthomyxoviridae</taxon>
        <taxon>Alphainfluenzavirus</taxon>
        <taxon>Alphainfluenzavirus influenzae</taxon>
        <taxon>Influenza A virus</taxon>
    </lineage>
</organism>
<sequence>MKAILLVLLYTFTAANADTLCIGYHANNSTDTVDTVLEKNVTVTHSVNLLEDRHNGKLCKLRGVAPLHLGKCNIAGWLLGNPECELLFTASSWSYIVETSNSDNGTCYPGDFINYEELREQLSSVSSFERFEIFPKASSWPNHETNRGVTAACPYAGANSFYRNLIWLVKKGNSYPKLSKSYVNNKEKEVLVLWGIHHPPTSTDQQSLYQNADAYVFVGSSKYNKKFKPEIATRPKVRGQAGRMNYYWTLVEPGDTITFEATGNLVVPRYAFAMKRGSGSGIIISDTPVHDCNTTCQTPKGAINTSLPFQNIHPVTIGECPKYVKSTKLRMATGLRNIPSIQSRGLFGAIAGFIEGGWTGMIDGWYGYHHQNEQGSGYAADRKSTQNAIDGITNKVNSVIEKMNTQFTAVGKEFNHLEKRIENLNKKVDDGFLDVWTYNAELLVLLENERTLDYHDSNVKNLYEKVRSQLKNNAKEIGNGCFEFYHKCDDTCMESVKNGTYDYPNYSEESKLNREEIDGVKLESTRIYQILAIYSTVASSLVLSVSLGAISFWMCSNGSLQCRICI</sequence>
<organismHost>
    <name type="scientific">Aves</name>
    <dbReference type="NCBI Taxonomy" id="8782"/>
</organismHost>
<organismHost>
    <name type="scientific">Homo sapiens</name>
    <name type="common">Human</name>
    <dbReference type="NCBI Taxonomy" id="9606"/>
</organismHost>
<organismHost>
    <name type="scientific">Sus scrofa</name>
    <name type="common">Pig</name>
    <dbReference type="NCBI Taxonomy" id="9823"/>
</organismHost>
<protein>
    <recommendedName>
        <fullName evidence="2">Hemagglutinin</fullName>
    </recommendedName>
    <component>
        <recommendedName>
            <fullName evidence="2">Hemagglutinin HA1 chain</fullName>
        </recommendedName>
    </component>
    <component>
        <recommendedName>
            <fullName evidence="2">Hemagglutinin HA2 chain</fullName>
        </recommendedName>
    </component>
</protein>